<reference key="1">
    <citation type="journal article" date="1998" name="Nature">
        <title>The complete genome of the hyperthermophilic bacterium Aquifex aeolicus.</title>
        <authorList>
            <person name="Deckert G."/>
            <person name="Warren P.V."/>
            <person name="Gaasterland T."/>
            <person name="Young W.G."/>
            <person name="Lenox A.L."/>
            <person name="Graham D.E."/>
            <person name="Overbeek R."/>
            <person name="Snead M.A."/>
            <person name="Keller M."/>
            <person name="Aujay M."/>
            <person name="Huber R."/>
            <person name="Feldman R.A."/>
            <person name="Short J.M."/>
            <person name="Olsen G.J."/>
            <person name="Swanson R.V."/>
        </authorList>
    </citation>
    <scope>NUCLEOTIDE SEQUENCE [LARGE SCALE GENOMIC DNA]</scope>
    <source>
        <strain>VF5</strain>
    </source>
</reference>
<name>EFTU_AQUAE</name>
<feature type="chain" id="PRO_0000091284" description="Elongation factor Tu">
    <location>
        <begin position="1"/>
        <end position="405"/>
    </location>
</feature>
<feature type="domain" description="tr-type G">
    <location>
        <begin position="10"/>
        <end position="213"/>
    </location>
</feature>
<feature type="region of interest" description="G1" evidence="1">
    <location>
        <begin position="19"/>
        <end position="26"/>
    </location>
</feature>
<feature type="region of interest" description="G2" evidence="1">
    <location>
        <begin position="64"/>
        <end position="68"/>
    </location>
</feature>
<feature type="region of interest" description="G3" evidence="1">
    <location>
        <begin position="85"/>
        <end position="88"/>
    </location>
</feature>
<feature type="region of interest" description="G4" evidence="1">
    <location>
        <begin position="140"/>
        <end position="143"/>
    </location>
</feature>
<feature type="region of interest" description="G5" evidence="1">
    <location>
        <begin position="178"/>
        <end position="180"/>
    </location>
</feature>
<feature type="binding site" evidence="2">
    <location>
        <begin position="19"/>
        <end position="26"/>
    </location>
    <ligand>
        <name>GTP</name>
        <dbReference type="ChEBI" id="CHEBI:37565"/>
    </ligand>
</feature>
<feature type="binding site" evidence="2">
    <location>
        <position position="26"/>
    </location>
    <ligand>
        <name>Mg(2+)</name>
        <dbReference type="ChEBI" id="CHEBI:18420"/>
    </ligand>
</feature>
<feature type="binding site" evidence="2">
    <location>
        <begin position="85"/>
        <end position="89"/>
    </location>
    <ligand>
        <name>GTP</name>
        <dbReference type="ChEBI" id="CHEBI:37565"/>
    </ligand>
</feature>
<feature type="binding site" evidence="2">
    <location>
        <begin position="140"/>
        <end position="143"/>
    </location>
    <ligand>
        <name>GTP</name>
        <dbReference type="ChEBI" id="CHEBI:37565"/>
    </ligand>
</feature>
<feature type="sequence variant" description="In TufB.">
    <original>N</original>
    <variation>S</variation>
    <location>
        <position position="140"/>
    </location>
</feature>
<feature type="sequence variant" description="In TufB.">
    <original>K</original>
    <variation>R</variation>
    <location>
        <position position="294"/>
    </location>
</feature>
<comment type="function">
    <text evidence="2">GTP hydrolase that promotes the GTP-dependent binding of aminoacyl-tRNA to the A-site of ribosomes during protein biosynthesis.</text>
</comment>
<comment type="catalytic activity">
    <reaction evidence="2">
        <text>GTP + H2O = GDP + phosphate + H(+)</text>
        <dbReference type="Rhea" id="RHEA:19669"/>
        <dbReference type="ChEBI" id="CHEBI:15377"/>
        <dbReference type="ChEBI" id="CHEBI:15378"/>
        <dbReference type="ChEBI" id="CHEBI:37565"/>
        <dbReference type="ChEBI" id="CHEBI:43474"/>
        <dbReference type="ChEBI" id="CHEBI:58189"/>
        <dbReference type="EC" id="3.6.5.3"/>
    </reaction>
    <physiologicalReaction direction="left-to-right" evidence="2">
        <dbReference type="Rhea" id="RHEA:19670"/>
    </physiologicalReaction>
</comment>
<comment type="subunit">
    <text evidence="2">Monomer.</text>
</comment>
<comment type="subcellular location">
    <subcellularLocation>
        <location evidence="2">Cytoplasm</location>
    </subcellularLocation>
</comment>
<comment type="similarity">
    <text evidence="2">Belongs to the TRAFAC class translation factor GTPase superfamily. Classic translation factor GTPase family. EF-Tu/EF-1A subfamily.</text>
</comment>
<dbReference type="EC" id="3.6.5.3" evidence="2"/>
<dbReference type="EMBL" id="AE000657">
    <property type="protein sequence ID" value="AAC06403.1"/>
    <property type="molecule type" value="Genomic_DNA"/>
</dbReference>
<dbReference type="EMBL" id="AE000657">
    <property type="protein sequence ID" value="AAC07714.1"/>
    <property type="molecule type" value="Genomic_DNA"/>
</dbReference>
<dbReference type="PIR" id="B70300">
    <property type="entry name" value="B70300"/>
</dbReference>
<dbReference type="PIR" id="G70465">
    <property type="entry name" value="G70465"/>
</dbReference>
<dbReference type="RefSeq" id="NP_212987.1">
    <property type="nucleotide sequence ID" value="NC_000918.1"/>
</dbReference>
<dbReference type="RefSeq" id="NP_214323.1">
    <property type="nucleotide sequence ID" value="NC_000918.1"/>
</dbReference>
<dbReference type="RefSeq" id="WP_010879925.1">
    <property type="nucleotide sequence ID" value="NC_000918.1"/>
</dbReference>
<dbReference type="SMR" id="O66429"/>
<dbReference type="FunCoup" id="O66429">
    <property type="interactions" value="482"/>
</dbReference>
<dbReference type="STRING" id="224324.aq_005"/>
<dbReference type="EnsemblBacteria" id="AAC06403">
    <property type="protein sequence ID" value="AAC06403"/>
    <property type="gene ID" value="aq_005"/>
</dbReference>
<dbReference type="EnsemblBacteria" id="AAC07714">
    <property type="protein sequence ID" value="AAC07714"/>
    <property type="gene ID" value="aq_1928"/>
</dbReference>
<dbReference type="KEGG" id="aae:aq_005"/>
<dbReference type="KEGG" id="aae:aq_1928"/>
<dbReference type="PATRIC" id="fig|224324.8.peg.1493"/>
<dbReference type="eggNOG" id="COG0050">
    <property type="taxonomic scope" value="Bacteria"/>
</dbReference>
<dbReference type="HOGENOM" id="CLU_007265_0_1_0"/>
<dbReference type="InParanoid" id="O66429"/>
<dbReference type="OrthoDB" id="9804504at2"/>
<dbReference type="Proteomes" id="UP000000798">
    <property type="component" value="Chromosome"/>
</dbReference>
<dbReference type="GO" id="GO:0005737">
    <property type="term" value="C:cytoplasm"/>
    <property type="evidence" value="ECO:0007669"/>
    <property type="project" value="UniProtKB-SubCell"/>
</dbReference>
<dbReference type="GO" id="GO:0005525">
    <property type="term" value="F:GTP binding"/>
    <property type="evidence" value="ECO:0007669"/>
    <property type="project" value="UniProtKB-UniRule"/>
</dbReference>
<dbReference type="GO" id="GO:0003924">
    <property type="term" value="F:GTPase activity"/>
    <property type="evidence" value="ECO:0007669"/>
    <property type="project" value="InterPro"/>
</dbReference>
<dbReference type="GO" id="GO:0003746">
    <property type="term" value="F:translation elongation factor activity"/>
    <property type="evidence" value="ECO:0000318"/>
    <property type="project" value="GO_Central"/>
</dbReference>
<dbReference type="GO" id="GO:0006414">
    <property type="term" value="P:translational elongation"/>
    <property type="evidence" value="ECO:0000318"/>
    <property type="project" value="GO_Central"/>
</dbReference>
<dbReference type="CDD" id="cd01884">
    <property type="entry name" value="EF_Tu"/>
    <property type="match status" value="1"/>
</dbReference>
<dbReference type="CDD" id="cd03697">
    <property type="entry name" value="EFTU_II"/>
    <property type="match status" value="1"/>
</dbReference>
<dbReference type="CDD" id="cd03707">
    <property type="entry name" value="EFTU_III"/>
    <property type="match status" value="1"/>
</dbReference>
<dbReference type="FunFam" id="2.40.30.10:FF:000001">
    <property type="entry name" value="Elongation factor Tu"/>
    <property type="match status" value="1"/>
</dbReference>
<dbReference type="FunFam" id="3.40.50.300:FF:000003">
    <property type="entry name" value="Elongation factor Tu"/>
    <property type="match status" value="1"/>
</dbReference>
<dbReference type="Gene3D" id="3.40.50.300">
    <property type="entry name" value="P-loop containing nucleotide triphosphate hydrolases"/>
    <property type="match status" value="1"/>
</dbReference>
<dbReference type="Gene3D" id="2.40.30.10">
    <property type="entry name" value="Translation factors"/>
    <property type="match status" value="2"/>
</dbReference>
<dbReference type="HAMAP" id="MF_00118_B">
    <property type="entry name" value="EF_Tu_B"/>
    <property type="match status" value="1"/>
</dbReference>
<dbReference type="InterPro" id="IPR041709">
    <property type="entry name" value="EF-Tu_GTP-bd"/>
</dbReference>
<dbReference type="InterPro" id="IPR050055">
    <property type="entry name" value="EF-Tu_GTPase"/>
</dbReference>
<dbReference type="InterPro" id="IPR004161">
    <property type="entry name" value="EFTu-like_2"/>
</dbReference>
<dbReference type="InterPro" id="IPR033720">
    <property type="entry name" value="EFTU_2"/>
</dbReference>
<dbReference type="InterPro" id="IPR031157">
    <property type="entry name" value="G_TR_CS"/>
</dbReference>
<dbReference type="InterPro" id="IPR027417">
    <property type="entry name" value="P-loop_NTPase"/>
</dbReference>
<dbReference type="InterPro" id="IPR005225">
    <property type="entry name" value="Small_GTP-bd"/>
</dbReference>
<dbReference type="InterPro" id="IPR000795">
    <property type="entry name" value="T_Tr_GTP-bd_dom"/>
</dbReference>
<dbReference type="InterPro" id="IPR009000">
    <property type="entry name" value="Transl_B-barrel_sf"/>
</dbReference>
<dbReference type="InterPro" id="IPR009001">
    <property type="entry name" value="Transl_elong_EF1A/Init_IF2_C"/>
</dbReference>
<dbReference type="InterPro" id="IPR004541">
    <property type="entry name" value="Transl_elong_EFTu/EF1A_bac/org"/>
</dbReference>
<dbReference type="InterPro" id="IPR004160">
    <property type="entry name" value="Transl_elong_EFTu/EF1A_C"/>
</dbReference>
<dbReference type="NCBIfam" id="TIGR00485">
    <property type="entry name" value="EF-Tu"/>
    <property type="match status" value="1"/>
</dbReference>
<dbReference type="NCBIfam" id="NF000766">
    <property type="entry name" value="PRK00049.1"/>
    <property type="match status" value="1"/>
</dbReference>
<dbReference type="NCBIfam" id="NF009372">
    <property type="entry name" value="PRK12735.1"/>
    <property type="match status" value="1"/>
</dbReference>
<dbReference type="NCBIfam" id="NF009373">
    <property type="entry name" value="PRK12736.1"/>
    <property type="match status" value="1"/>
</dbReference>
<dbReference type="NCBIfam" id="TIGR00231">
    <property type="entry name" value="small_GTP"/>
    <property type="match status" value="1"/>
</dbReference>
<dbReference type="PANTHER" id="PTHR43721:SF22">
    <property type="entry name" value="ELONGATION FACTOR TU, MITOCHONDRIAL"/>
    <property type="match status" value="1"/>
</dbReference>
<dbReference type="PANTHER" id="PTHR43721">
    <property type="entry name" value="ELONGATION FACTOR TU-RELATED"/>
    <property type="match status" value="1"/>
</dbReference>
<dbReference type="Pfam" id="PF00009">
    <property type="entry name" value="GTP_EFTU"/>
    <property type="match status" value="1"/>
</dbReference>
<dbReference type="Pfam" id="PF03144">
    <property type="entry name" value="GTP_EFTU_D2"/>
    <property type="match status" value="1"/>
</dbReference>
<dbReference type="Pfam" id="PF03143">
    <property type="entry name" value="GTP_EFTU_D3"/>
    <property type="match status" value="1"/>
</dbReference>
<dbReference type="PRINTS" id="PR00315">
    <property type="entry name" value="ELONGATNFCT"/>
</dbReference>
<dbReference type="SUPFAM" id="SSF50465">
    <property type="entry name" value="EF-Tu/eEF-1alpha/eIF2-gamma C-terminal domain"/>
    <property type="match status" value="1"/>
</dbReference>
<dbReference type="SUPFAM" id="SSF52540">
    <property type="entry name" value="P-loop containing nucleoside triphosphate hydrolases"/>
    <property type="match status" value="1"/>
</dbReference>
<dbReference type="SUPFAM" id="SSF50447">
    <property type="entry name" value="Translation proteins"/>
    <property type="match status" value="1"/>
</dbReference>
<dbReference type="PROSITE" id="PS00301">
    <property type="entry name" value="G_TR_1"/>
    <property type="match status" value="1"/>
</dbReference>
<dbReference type="PROSITE" id="PS51722">
    <property type="entry name" value="G_TR_2"/>
    <property type="match status" value="1"/>
</dbReference>
<organism>
    <name type="scientific">Aquifex aeolicus (strain VF5)</name>
    <dbReference type="NCBI Taxonomy" id="224324"/>
    <lineage>
        <taxon>Bacteria</taxon>
        <taxon>Pseudomonadati</taxon>
        <taxon>Aquificota</taxon>
        <taxon>Aquificia</taxon>
        <taxon>Aquificales</taxon>
        <taxon>Aquificaceae</taxon>
        <taxon>Aquifex</taxon>
    </lineage>
</organism>
<sequence length="405" mass="44743">MAKEKFERTKEHVNVGTIGHVDHGKSTLTSAITCVLAAGLVEGGKAKCFKYEEIDKAPEEKERGITINITHVEYETAKRHYAHVDCPGHADYIKNMITGAAQMDGAILVVSAADGPMPQTREHVLLARQVNVPYIVVFMNKCDMVDDEELLELVELEVRELLSKYEYPGDEVPVIRGSALGALQELEQNSPGKWVESIKELLNAMDEYIPTPQREVDKPFLMPIEDVFSISGRGTVVTGRVERGVLRPGDEVEIVGLREEPLKTVATSIEMFRKVLDEALPGDNIGVLLRGVGKDDVERGQVLAQPGSVKAHKRFRAQVYVLSKEEGGRHTPFFVNYRPQFYFRTADVTGTVVKLPEGVEMVMPGDNVELEVELIAPVALEEGLRFAIREGGRTVGAGVVTKILD</sequence>
<proteinExistence type="inferred from homology"/>
<accession>O66429</accession>
<accession>O67755</accession>
<evidence type="ECO:0000250" key="1"/>
<evidence type="ECO:0000255" key="2">
    <source>
        <dbReference type="HAMAP-Rule" id="MF_00118"/>
    </source>
</evidence>
<protein>
    <recommendedName>
        <fullName evidence="2">Elongation factor Tu</fullName>
        <shortName evidence="2">EF-Tu</shortName>
        <ecNumber evidence="2">3.6.5.3</ecNumber>
    </recommendedName>
</protein>
<keyword id="KW-0963">Cytoplasm</keyword>
<keyword id="KW-0251">Elongation factor</keyword>
<keyword id="KW-0342">GTP-binding</keyword>
<keyword id="KW-0378">Hydrolase</keyword>
<keyword id="KW-0460">Magnesium</keyword>
<keyword id="KW-0479">Metal-binding</keyword>
<keyword id="KW-0547">Nucleotide-binding</keyword>
<keyword id="KW-0648">Protein biosynthesis</keyword>
<keyword id="KW-1185">Reference proteome</keyword>
<gene>
    <name evidence="2" type="primary">tufA</name>
    <name type="ordered locus">aq_005</name>
</gene>
<gene>
    <name evidence="2" type="primary">tufB</name>
    <name type="ordered locus">aq_1928</name>
</gene>